<proteinExistence type="inferred from homology"/>
<sequence length="538" mass="57027">MAVISKKIPAPDKVEIKTALLSVFDKTGIVELAQALSEQGVRLLSTGGTYKAIAAAGLAVTDVSEITGFPEIMDGRVKTLHPTVHGGLLAIRDDSEHQEAMKTHGIEAIDLAVINLYPFEDVRAAGGDYPTTVENIDIGGPAMIRASAKNHAYVTILTDPNDYAEFTEQLSADGGKTAYAFRQRMAAKAYARTAAYDAVISNWFAEALSIDTPRHRVIGGALKEEMRYGENPHQKAAFYVTGEKRPGVSTAALLQGKQLSYNNINDTDAAYELVAEFLPEKEPACAIIKHANPCGVATGSSLVEAYRRALACDSVSAFGGIIALNRTLDAETAEEIVKLFTEVIIAPDVTEEAKAIIARKPNLRLLSAGGLPDPRAAGLTAKTVSGGLLVQSRDNGMVEDLELKVVTKRAPTAQELDDMKFAFKIGKHVKSNAVVYAKDGQTAGIGAGQMSRVDSARIAALKAEEAAKALGLAVPMTHGSAVASEAFLPFADGLLSMIAAGATAVIQPGGSMRDQEVIDAADEHGIAMVFTGMRHFRH</sequence>
<accession>B5ZV31</accession>
<feature type="chain" id="PRO_1000096087" description="Bifunctional purine biosynthesis protein PurH">
    <location>
        <begin position="1"/>
        <end position="538"/>
    </location>
</feature>
<feature type="domain" description="MGS-like" evidence="2">
    <location>
        <begin position="8"/>
        <end position="158"/>
    </location>
</feature>
<organism>
    <name type="scientific">Rhizobium leguminosarum bv. trifolii (strain WSM2304)</name>
    <dbReference type="NCBI Taxonomy" id="395492"/>
    <lineage>
        <taxon>Bacteria</taxon>
        <taxon>Pseudomonadati</taxon>
        <taxon>Pseudomonadota</taxon>
        <taxon>Alphaproteobacteria</taxon>
        <taxon>Hyphomicrobiales</taxon>
        <taxon>Rhizobiaceae</taxon>
        <taxon>Rhizobium/Agrobacterium group</taxon>
        <taxon>Rhizobium</taxon>
    </lineage>
</organism>
<comment type="catalytic activity">
    <reaction evidence="1">
        <text>(6R)-10-formyltetrahydrofolate + 5-amino-1-(5-phospho-beta-D-ribosyl)imidazole-4-carboxamide = 5-formamido-1-(5-phospho-D-ribosyl)imidazole-4-carboxamide + (6S)-5,6,7,8-tetrahydrofolate</text>
        <dbReference type="Rhea" id="RHEA:22192"/>
        <dbReference type="ChEBI" id="CHEBI:57453"/>
        <dbReference type="ChEBI" id="CHEBI:58467"/>
        <dbReference type="ChEBI" id="CHEBI:58475"/>
        <dbReference type="ChEBI" id="CHEBI:195366"/>
        <dbReference type="EC" id="2.1.2.3"/>
    </reaction>
</comment>
<comment type="catalytic activity">
    <reaction evidence="1">
        <text>IMP + H2O = 5-formamido-1-(5-phospho-D-ribosyl)imidazole-4-carboxamide</text>
        <dbReference type="Rhea" id="RHEA:18445"/>
        <dbReference type="ChEBI" id="CHEBI:15377"/>
        <dbReference type="ChEBI" id="CHEBI:58053"/>
        <dbReference type="ChEBI" id="CHEBI:58467"/>
        <dbReference type="EC" id="3.5.4.10"/>
    </reaction>
</comment>
<comment type="pathway">
    <text evidence="1">Purine metabolism; IMP biosynthesis via de novo pathway; 5-formamido-1-(5-phospho-D-ribosyl)imidazole-4-carboxamide from 5-amino-1-(5-phospho-D-ribosyl)imidazole-4-carboxamide (10-formyl THF route): step 1/1.</text>
</comment>
<comment type="pathway">
    <text evidence="1">Purine metabolism; IMP biosynthesis via de novo pathway; IMP from 5-formamido-1-(5-phospho-D-ribosyl)imidazole-4-carboxamide: step 1/1.</text>
</comment>
<comment type="domain">
    <text evidence="1">The IMP cyclohydrolase activity resides in the N-terminal region.</text>
</comment>
<comment type="similarity">
    <text evidence="1">Belongs to the PurH family.</text>
</comment>
<gene>
    <name evidence="1" type="primary">purH</name>
    <name type="ordered locus">Rleg2_3915</name>
</gene>
<reference key="1">
    <citation type="journal article" date="2010" name="Stand. Genomic Sci.">
        <title>Complete genome sequence of Rhizobium leguminosarum bv trifolii strain WSM2304, an effective microsymbiont of the South American clover Trifolium polymorphum.</title>
        <authorList>
            <person name="Reeve W."/>
            <person name="O'Hara G."/>
            <person name="Chain P."/>
            <person name="Ardley J."/>
            <person name="Brau L."/>
            <person name="Nandesena K."/>
            <person name="Tiwari R."/>
            <person name="Malfatti S."/>
            <person name="Kiss H."/>
            <person name="Lapidus A."/>
            <person name="Copeland A."/>
            <person name="Nolan M."/>
            <person name="Land M."/>
            <person name="Ivanova N."/>
            <person name="Mavromatis K."/>
            <person name="Markowitz V."/>
            <person name="Kyrpides N."/>
            <person name="Melino V."/>
            <person name="Denton M."/>
            <person name="Yates R."/>
            <person name="Howieson J."/>
        </authorList>
    </citation>
    <scope>NUCLEOTIDE SEQUENCE [LARGE SCALE GENOMIC DNA]</scope>
    <source>
        <strain>WSM2304</strain>
    </source>
</reference>
<protein>
    <recommendedName>
        <fullName evidence="1">Bifunctional purine biosynthesis protein PurH</fullName>
    </recommendedName>
    <domain>
        <recommendedName>
            <fullName evidence="1">Phosphoribosylaminoimidazolecarboxamide formyltransferase</fullName>
            <ecNumber evidence="1">2.1.2.3</ecNumber>
        </recommendedName>
        <alternativeName>
            <fullName evidence="1">AICAR transformylase</fullName>
        </alternativeName>
    </domain>
    <domain>
        <recommendedName>
            <fullName evidence="1">IMP cyclohydrolase</fullName>
            <ecNumber evidence="1">3.5.4.10</ecNumber>
        </recommendedName>
        <alternativeName>
            <fullName evidence="1">ATIC</fullName>
        </alternativeName>
        <alternativeName>
            <fullName evidence="1">IMP synthase</fullName>
        </alternativeName>
        <alternativeName>
            <fullName evidence="1">Inosinicase</fullName>
        </alternativeName>
    </domain>
</protein>
<evidence type="ECO:0000255" key="1">
    <source>
        <dbReference type="HAMAP-Rule" id="MF_00139"/>
    </source>
</evidence>
<evidence type="ECO:0000255" key="2">
    <source>
        <dbReference type="PROSITE-ProRule" id="PRU01202"/>
    </source>
</evidence>
<dbReference type="EC" id="2.1.2.3" evidence="1"/>
<dbReference type="EC" id="3.5.4.10" evidence="1"/>
<dbReference type="EMBL" id="CP001191">
    <property type="protein sequence ID" value="ACI57177.1"/>
    <property type="molecule type" value="Genomic_DNA"/>
</dbReference>
<dbReference type="RefSeq" id="WP_012559376.1">
    <property type="nucleotide sequence ID" value="NC_011369.1"/>
</dbReference>
<dbReference type="SMR" id="B5ZV31"/>
<dbReference type="STRING" id="395492.Rleg2_3915"/>
<dbReference type="KEGG" id="rlt:Rleg2_3915"/>
<dbReference type="eggNOG" id="COG0138">
    <property type="taxonomic scope" value="Bacteria"/>
</dbReference>
<dbReference type="HOGENOM" id="CLU_016316_5_2_5"/>
<dbReference type="UniPathway" id="UPA00074">
    <property type="reaction ID" value="UER00133"/>
</dbReference>
<dbReference type="UniPathway" id="UPA00074">
    <property type="reaction ID" value="UER00135"/>
</dbReference>
<dbReference type="Proteomes" id="UP000008330">
    <property type="component" value="Chromosome"/>
</dbReference>
<dbReference type="GO" id="GO:0005829">
    <property type="term" value="C:cytosol"/>
    <property type="evidence" value="ECO:0007669"/>
    <property type="project" value="TreeGrafter"/>
</dbReference>
<dbReference type="GO" id="GO:0003937">
    <property type="term" value="F:IMP cyclohydrolase activity"/>
    <property type="evidence" value="ECO:0007669"/>
    <property type="project" value="UniProtKB-UniRule"/>
</dbReference>
<dbReference type="GO" id="GO:0004643">
    <property type="term" value="F:phosphoribosylaminoimidazolecarboxamide formyltransferase activity"/>
    <property type="evidence" value="ECO:0007669"/>
    <property type="project" value="UniProtKB-UniRule"/>
</dbReference>
<dbReference type="GO" id="GO:0006189">
    <property type="term" value="P:'de novo' IMP biosynthetic process"/>
    <property type="evidence" value="ECO:0007669"/>
    <property type="project" value="UniProtKB-UniRule"/>
</dbReference>
<dbReference type="CDD" id="cd01421">
    <property type="entry name" value="IMPCH"/>
    <property type="match status" value="1"/>
</dbReference>
<dbReference type="FunFam" id="3.40.140.20:FF:000001">
    <property type="entry name" value="Bifunctional purine biosynthesis protein PurH"/>
    <property type="match status" value="1"/>
</dbReference>
<dbReference type="FunFam" id="3.40.140.20:FF:000002">
    <property type="entry name" value="Bifunctional purine biosynthesis protein PurH"/>
    <property type="match status" value="1"/>
</dbReference>
<dbReference type="FunFam" id="3.40.50.1380:FF:000001">
    <property type="entry name" value="Bifunctional purine biosynthesis protein PurH"/>
    <property type="match status" value="1"/>
</dbReference>
<dbReference type="Gene3D" id="3.40.140.20">
    <property type="match status" value="2"/>
</dbReference>
<dbReference type="Gene3D" id="3.40.50.1380">
    <property type="entry name" value="Methylglyoxal synthase-like domain"/>
    <property type="match status" value="1"/>
</dbReference>
<dbReference type="HAMAP" id="MF_00139">
    <property type="entry name" value="PurH"/>
    <property type="match status" value="1"/>
</dbReference>
<dbReference type="InterPro" id="IPR024051">
    <property type="entry name" value="AICAR_Tfase_dup_dom_sf"/>
</dbReference>
<dbReference type="InterPro" id="IPR016193">
    <property type="entry name" value="Cytidine_deaminase-like"/>
</dbReference>
<dbReference type="InterPro" id="IPR011607">
    <property type="entry name" value="MGS-like_dom"/>
</dbReference>
<dbReference type="InterPro" id="IPR036914">
    <property type="entry name" value="MGS-like_dom_sf"/>
</dbReference>
<dbReference type="InterPro" id="IPR002695">
    <property type="entry name" value="PurH-like"/>
</dbReference>
<dbReference type="NCBIfam" id="NF002049">
    <property type="entry name" value="PRK00881.1"/>
    <property type="match status" value="1"/>
</dbReference>
<dbReference type="NCBIfam" id="TIGR00355">
    <property type="entry name" value="purH"/>
    <property type="match status" value="1"/>
</dbReference>
<dbReference type="PANTHER" id="PTHR11692:SF0">
    <property type="entry name" value="BIFUNCTIONAL PURINE BIOSYNTHESIS PROTEIN ATIC"/>
    <property type="match status" value="1"/>
</dbReference>
<dbReference type="PANTHER" id="PTHR11692">
    <property type="entry name" value="BIFUNCTIONAL PURINE BIOSYNTHESIS PROTEIN PURH"/>
    <property type="match status" value="1"/>
</dbReference>
<dbReference type="Pfam" id="PF01808">
    <property type="entry name" value="AICARFT_IMPCHas"/>
    <property type="match status" value="1"/>
</dbReference>
<dbReference type="Pfam" id="PF02142">
    <property type="entry name" value="MGS"/>
    <property type="match status" value="1"/>
</dbReference>
<dbReference type="PIRSF" id="PIRSF000414">
    <property type="entry name" value="AICARFT_IMPCHas"/>
    <property type="match status" value="1"/>
</dbReference>
<dbReference type="SMART" id="SM00798">
    <property type="entry name" value="AICARFT_IMPCHas"/>
    <property type="match status" value="1"/>
</dbReference>
<dbReference type="SMART" id="SM00851">
    <property type="entry name" value="MGS"/>
    <property type="match status" value="1"/>
</dbReference>
<dbReference type="SUPFAM" id="SSF53927">
    <property type="entry name" value="Cytidine deaminase-like"/>
    <property type="match status" value="1"/>
</dbReference>
<dbReference type="SUPFAM" id="SSF52335">
    <property type="entry name" value="Methylglyoxal synthase-like"/>
    <property type="match status" value="1"/>
</dbReference>
<dbReference type="PROSITE" id="PS51855">
    <property type="entry name" value="MGS"/>
    <property type="match status" value="1"/>
</dbReference>
<keyword id="KW-0378">Hydrolase</keyword>
<keyword id="KW-0511">Multifunctional enzyme</keyword>
<keyword id="KW-0658">Purine biosynthesis</keyword>
<keyword id="KW-1185">Reference proteome</keyword>
<keyword id="KW-0808">Transferase</keyword>
<name>PUR9_RHILW</name>